<feature type="signal peptide" evidence="1">
    <location>
        <begin position="1"/>
        <end position="22"/>
    </location>
</feature>
<feature type="chain" id="PRO_0000273190" description="Fibrinogen-like protein 1">
    <location>
        <begin position="23"/>
        <end position="312"/>
    </location>
</feature>
<feature type="domain" description="Fibrinogen C-terminal" evidence="3">
    <location>
        <begin position="74"/>
        <end position="306"/>
    </location>
</feature>
<feature type="coiled-coil region" evidence="2">
    <location>
        <begin position="39"/>
        <end position="60"/>
    </location>
</feature>
<feature type="disulfide bond" description="Interchain" evidence="3">
    <location>
        <position position="26"/>
    </location>
</feature>
<feature type="disulfide bond" evidence="3">
    <location>
        <begin position="83"/>
        <end position="112"/>
    </location>
</feature>
<feature type="disulfide bond" evidence="3">
    <location>
        <begin position="248"/>
        <end position="261"/>
    </location>
</feature>
<sequence>MAKMFSFILVTTALVMGRGSSALENCLQEQARLRAQVYLLETRVKQQQVKISQLLHEKQVQLLDKGEENSVIDLGGKRQYADCSEIFNDGYKQSGFYKIKPLQSPAEFSVYCDMSDGGGWTVIQRRSDGSENFNRDWSDYENGFGNFVQKNGEYWLGNRNLHLLTTQGDYTLKIDLADFEKNSRYAQYKNFKVGDEKNSYDLHIGEYSGTAGDSLTGNFHPEVQWWASHQRMKFSTWDRDNDNYEGNCAKEDQSGWWFNRCHSANLNGFYHKGPYTAKTDNGIVWHTWHGWWYSLKSVVMKIRPNDFIPNIV</sequence>
<protein>
    <recommendedName>
        <fullName>Fibrinogen-like protein 1</fullName>
    </recommendedName>
</protein>
<organism>
    <name type="scientific">Bos taurus</name>
    <name type="common">Bovine</name>
    <dbReference type="NCBI Taxonomy" id="9913"/>
    <lineage>
        <taxon>Eukaryota</taxon>
        <taxon>Metazoa</taxon>
        <taxon>Chordata</taxon>
        <taxon>Craniata</taxon>
        <taxon>Vertebrata</taxon>
        <taxon>Euteleostomi</taxon>
        <taxon>Mammalia</taxon>
        <taxon>Eutheria</taxon>
        <taxon>Laurasiatheria</taxon>
        <taxon>Artiodactyla</taxon>
        <taxon>Ruminantia</taxon>
        <taxon>Pecora</taxon>
        <taxon>Bovidae</taxon>
        <taxon>Bovinae</taxon>
        <taxon>Bos</taxon>
    </lineage>
</organism>
<reference key="1">
    <citation type="submission" date="2005-08" db="EMBL/GenBank/DDBJ databases">
        <authorList>
            <consortium name="NIH - Mammalian Gene Collection (MGC) project"/>
        </authorList>
    </citation>
    <scope>NUCLEOTIDE SEQUENCE [LARGE SCALE MRNA]</scope>
    <source>
        <strain>Hereford</strain>
        <tissue>Testis</tissue>
    </source>
</reference>
<proteinExistence type="evidence at transcript level"/>
<comment type="function">
    <text evidence="1">Immune suppressive molecule that inhibits antigen-specific T-cell activation by acting as a major ligand of LAG3. Responsible for LAG3 T-cell inhibitory function. Binds LAG3 independently from MHC class II (MHC-II). Secreted by, and promotes growth of, hepatocytes.</text>
</comment>
<comment type="subunit">
    <text evidence="1">Homodimer. Interacts (via the Fibrinogen C-terminal domain) with LAG3 (via Ig-like domains 1 and 2).</text>
</comment>
<comment type="subcellular location">
    <subcellularLocation>
        <location evidence="1">Secreted</location>
    </subcellularLocation>
    <text evidence="1">Secreted in the blood plasma.</text>
</comment>
<name>FGL1_BOVIN</name>
<keyword id="KW-1064">Adaptive immunity</keyword>
<keyword id="KW-0175">Coiled coil</keyword>
<keyword id="KW-1015">Disulfide bond</keyword>
<keyword id="KW-0391">Immunity</keyword>
<keyword id="KW-1185">Reference proteome</keyword>
<keyword id="KW-0964">Secreted</keyword>
<keyword id="KW-0732">Signal</keyword>
<accession>Q3SZZ7</accession>
<evidence type="ECO:0000250" key="1">
    <source>
        <dbReference type="UniProtKB" id="Q08830"/>
    </source>
</evidence>
<evidence type="ECO:0000255" key="2"/>
<evidence type="ECO:0000255" key="3">
    <source>
        <dbReference type="PROSITE-ProRule" id="PRU00739"/>
    </source>
</evidence>
<dbReference type="EMBL" id="BC102634">
    <property type="protein sequence ID" value="AAI02635.1"/>
    <property type="molecule type" value="mRNA"/>
</dbReference>
<dbReference type="RefSeq" id="NP_001029485.1">
    <property type="nucleotide sequence ID" value="NM_001034313.2"/>
</dbReference>
<dbReference type="SMR" id="Q3SZZ7"/>
<dbReference type="FunCoup" id="Q3SZZ7">
    <property type="interactions" value="62"/>
</dbReference>
<dbReference type="STRING" id="9913.ENSBTAP00000021534"/>
<dbReference type="PaxDb" id="9913-ENSBTAP00000021534"/>
<dbReference type="GeneID" id="508090"/>
<dbReference type="KEGG" id="bta:508090"/>
<dbReference type="CTD" id="2267"/>
<dbReference type="VEuPathDB" id="HostDB:ENSBTAG00000016177"/>
<dbReference type="eggNOG" id="KOG2579">
    <property type="taxonomic scope" value="Eukaryota"/>
</dbReference>
<dbReference type="HOGENOM" id="CLU_038628_1_3_1"/>
<dbReference type="InParanoid" id="Q3SZZ7"/>
<dbReference type="OMA" id="ASHQGIK"/>
<dbReference type="OrthoDB" id="7725475at2759"/>
<dbReference type="TreeFam" id="TF336658"/>
<dbReference type="Proteomes" id="UP000009136">
    <property type="component" value="Chromosome 27"/>
</dbReference>
<dbReference type="Bgee" id="ENSBTAG00000016177">
    <property type="expression patterns" value="Expressed in liver and 106 other cell types or tissues"/>
</dbReference>
<dbReference type="GO" id="GO:0062023">
    <property type="term" value="C:collagen-containing extracellular matrix"/>
    <property type="evidence" value="ECO:0000318"/>
    <property type="project" value="GO_Central"/>
</dbReference>
<dbReference type="GO" id="GO:0005576">
    <property type="term" value="C:extracellular region"/>
    <property type="evidence" value="ECO:0000250"/>
    <property type="project" value="UniProtKB"/>
</dbReference>
<dbReference type="GO" id="GO:0005615">
    <property type="term" value="C:extracellular space"/>
    <property type="evidence" value="ECO:0000318"/>
    <property type="project" value="GO_Central"/>
</dbReference>
<dbReference type="GO" id="GO:0002250">
    <property type="term" value="P:adaptive immune response"/>
    <property type="evidence" value="ECO:0007669"/>
    <property type="project" value="UniProtKB-KW"/>
</dbReference>
<dbReference type="GO" id="GO:0007596">
    <property type="term" value="P:blood coagulation"/>
    <property type="evidence" value="ECO:0007669"/>
    <property type="project" value="InterPro"/>
</dbReference>
<dbReference type="GO" id="GO:0072574">
    <property type="term" value="P:hepatocyte proliferation"/>
    <property type="evidence" value="ECO:0000250"/>
    <property type="project" value="UniProtKB"/>
</dbReference>
<dbReference type="GO" id="GO:0050868">
    <property type="term" value="P:negative regulation of T cell activation"/>
    <property type="evidence" value="ECO:0000250"/>
    <property type="project" value="UniProtKB"/>
</dbReference>
<dbReference type="GO" id="GO:0050776">
    <property type="term" value="P:regulation of immune response"/>
    <property type="evidence" value="ECO:0000250"/>
    <property type="project" value="UniProtKB"/>
</dbReference>
<dbReference type="CDD" id="cd00087">
    <property type="entry name" value="FReD"/>
    <property type="match status" value="1"/>
</dbReference>
<dbReference type="FunFam" id="3.90.215.10:FF:000001">
    <property type="entry name" value="Tenascin isoform 1"/>
    <property type="match status" value="1"/>
</dbReference>
<dbReference type="Gene3D" id="3.90.215.10">
    <property type="entry name" value="Gamma Fibrinogen, chain A, domain 1"/>
    <property type="match status" value="1"/>
</dbReference>
<dbReference type="InterPro" id="IPR037579">
    <property type="entry name" value="FIB_ANG-like"/>
</dbReference>
<dbReference type="InterPro" id="IPR036056">
    <property type="entry name" value="Fibrinogen-like_C"/>
</dbReference>
<dbReference type="InterPro" id="IPR014716">
    <property type="entry name" value="Fibrinogen_a/b/g_C_1"/>
</dbReference>
<dbReference type="InterPro" id="IPR002181">
    <property type="entry name" value="Fibrinogen_a/b/g_C_dom"/>
</dbReference>
<dbReference type="InterPro" id="IPR020837">
    <property type="entry name" value="Fibrinogen_CS"/>
</dbReference>
<dbReference type="NCBIfam" id="NF040941">
    <property type="entry name" value="GGGWT_bact"/>
    <property type="match status" value="1"/>
</dbReference>
<dbReference type="PANTHER" id="PTHR47221">
    <property type="entry name" value="FIBRINOGEN ALPHA CHAIN"/>
    <property type="match status" value="1"/>
</dbReference>
<dbReference type="PANTHER" id="PTHR47221:SF8">
    <property type="entry name" value="FIBRINOGEN LIKE 1A"/>
    <property type="match status" value="1"/>
</dbReference>
<dbReference type="Pfam" id="PF00147">
    <property type="entry name" value="Fibrinogen_C"/>
    <property type="match status" value="1"/>
</dbReference>
<dbReference type="SMART" id="SM00186">
    <property type="entry name" value="FBG"/>
    <property type="match status" value="1"/>
</dbReference>
<dbReference type="SUPFAM" id="SSF56496">
    <property type="entry name" value="Fibrinogen C-terminal domain-like"/>
    <property type="match status" value="1"/>
</dbReference>
<dbReference type="PROSITE" id="PS00514">
    <property type="entry name" value="FIBRINOGEN_C_1"/>
    <property type="match status" value="1"/>
</dbReference>
<dbReference type="PROSITE" id="PS51406">
    <property type="entry name" value="FIBRINOGEN_C_2"/>
    <property type="match status" value="1"/>
</dbReference>
<gene>
    <name type="primary">FGL1</name>
</gene>